<gene>
    <name evidence="1" type="primary">rpsG</name>
    <name type="ordered locus">SAR11_1120</name>
</gene>
<proteinExistence type="inferred from homology"/>
<protein>
    <recommendedName>
        <fullName evidence="1">Small ribosomal subunit protein uS7</fullName>
    </recommendedName>
    <alternativeName>
        <fullName evidence="2">30S ribosomal protein S7</fullName>
    </alternativeName>
</protein>
<organism>
    <name type="scientific">Pelagibacter ubique (strain HTCC1062)</name>
    <dbReference type="NCBI Taxonomy" id="335992"/>
    <lineage>
        <taxon>Bacteria</taxon>
        <taxon>Pseudomonadati</taxon>
        <taxon>Pseudomonadota</taxon>
        <taxon>Alphaproteobacteria</taxon>
        <taxon>Candidatus Pelagibacterales</taxon>
        <taxon>Candidatus Pelagibacteraceae</taxon>
        <taxon>Candidatus Pelagibacter</taxon>
    </lineage>
</organism>
<comment type="function">
    <text evidence="1">One of the primary rRNA binding proteins, it binds directly to 16S rRNA where it nucleates assembly of the head domain of the 30S subunit. Is located at the subunit interface close to the decoding center, probably blocks exit of the E-site tRNA.</text>
</comment>
<comment type="subunit">
    <text evidence="1">Part of the 30S ribosomal subunit. Contacts proteins S9 and S11.</text>
</comment>
<comment type="similarity">
    <text evidence="1">Belongs to the universal ribosomal protein uS7 family.</text>
</comment>
<keyword id="KW-1185">Reference proteome</keyword>
<keyword id="KW-0687">Ribonucleoprotein</keyword>
<keyword id="KW-0689">Ribosomal protein</keyword>
<keyword id="KW-0694">RNA-binding</keyword>
<keyword id="KW-0699">rRNA-binding</keyword>
<keyword id="KW-0820">tRNA-binding</keyword>
<reference key="1">
    <citation type="journal article" date="2005" name="Science">
        <title>Genome streamlining in a cosmopolitan oceanic bacterium.</title>
        <authorList>
            <person name="Giovannoni S.J."/>
            <person name="Tripp H.J."/>
            <person name="Givan S."/>
            <person name="Podar M."/>
            <person name="Vergin K.L."/>
            <person name="Baptista D."/>
            <person name="Bibbs L."/>
            <person name="Eads J."/>
            <person name="Richardson T.H."/>
            <person name="Noordewier M."/>
            <person name="Rappe M.S."/>
            <person name="Short J.M."/>
            <person name="Carrington J.C."/>
            <person name="Mathur E.J."/>
        </authorList>
    </citation>
    <scope>NUCLEOTIDE SEQUENCE [LARGE SCALE GENOMIC DNA]</scope>
    <source>
        <strain>HTCC1062</strain>
    </source>
</reference>
<feature type="chain" id="PRO_0000226513" description="Small ribosomal subunit protein uS7">
    <location>
        <begin position="1"/>
        <end position="156"/>
    </location>
</feature>
<dbReference type="EMBL" id="CP000084">
    <property type="protein sequence ID" value="AAZ21923.1"/>
    <property type="molecule type" value="Genomic_DNA"/>
</dbReference>
<dbReference type="RefSeq" id="WP_006996808.1">
    <property type="nucleotide sequence ID" value="NC_007205.1"/>
</dbReference>
<dbReference type="SMR" id="Q4FLL5"/>
<dbReference type="STRING" id="335992.SAR11_1120"/>
<dbReference type="GeneID" id="66295609"/>
<dbReference type="KEGG" id="pub:SAR11_1120"/>
<dbReference type="eggNOG" id="COG0049">
    <property type="taxonomic scope" value="Bacteria"/>
</dbReference>
<dbReference type="HOGENOM" id="CLU_072226_1_1_5"/>
<dbReference type="OrthoDB" id="9807653at2"/>
<dbReference type="Proteomes" id="UP000002528">
    <property type="component" value="Chromosome"/>
</dbReference>
<dbReference type="GO" id="GO:0015935">
    <property type="term" value="C:small ribosomal subunit"/>
    <property type="evidence" value="ECO:0007669"/>
    <property type="project" value="InterPro"/>
</dbReference>
<dbReference type="GO" id="GO:0019843">
    <property type="term" value="F:rRNA binding"/>
    <property type="evidence" value="ECO:0007669"/>
    <property type="project" value="UniProtKB-UniRule"/>
</dbReference>
<dbReference type="GO" id="GO:0003735">
    <property type="term" value="F:structural constituent of ribosome"/>
    <property type="evidence" value="ECO:0007669"/>
    <property type="project" value="InterPro"/>
</dbReference>
<dbReference type="GO" id="GO:0000049">
    <property type="term" value="F:tRNA binding"/>
    <property type="evidence" value="ECO:0007669"/>
    <property type="project" value="UniProtKB-UniRule"/>
</dbReference>
<dbReference type="GO" id="GO:0006412">
    <property type="term" value="P:translation"/>
    <property type="evidence" value="ECO:0007669"/>
    <property type="project" value="UniProtKB-UniRule"/>
</dbReference>
<dbReference type="CDD" id="cd14869">
    <property type="entry name" value="uS7_Bacteria"/>
    <property type="match status" value="1"/>
</dbReference>
<dbReference type="FunFam" id="1.10.455.10:FF:000001">
    <property type="entry name" value="30S ribosomal protein S7"/>
    <property type="match status" value="1"/>
</dbReference>
<dbReference type="Gene3D" id="1.10.455.10">
    <property type="entry name" value="Ribosomal protein S7 domain"/>
    <property type="match status" value="1"/>
</dbReference>
<dbReference type="HAMAP" id="MF_00480_B">
    <property type="entry name" value="Ribosomal_uS7_B"/>
    <property type="match status" value="1"/>
</dbReference>
<dbReference type="InterPro" id="IPR000235">
    <property type="entry name" value="Ribosomal_uS7"/>
</dbReference>
<dbReference type="InterPro" id="IPR005717">
    <property type="entry name" value="Ribosomal_uS7_bac/org-type"/>
</dbReference>
<dbReference type="InterPro" id="IPR020606">
    <property type="entry name" value="Ribosomal_uS7_CS"/>
</dbReference>
<dbReference type="InterPro" id="IPR023798">
    <property type="entry name" value="Ribosomal_uS7_dom"/>
</dbReference>
<dbReference type="InterPro" id="IPR036823">
    <property type="entry name" value="Ribosomal_uS7_dom_sf"/>
</dbReference>
<dbReference type="NCBIfam" id="TIGR01029">
    <property type="entry name" value="rpsG_bact"/>
    <property type="match status" value="1"/>
</dbReference>
<dbReference type="PANTHER" id="PTHR11205">
    <property type="entry name" value="RIBOSOMAL PROTEIN S7"/>
    <property type="match status" value="1"/>
</dbReference>
<dbReference type="Pfam" id="PF00177">
    <property type="entry name" value="Ribosomal_S7"/>
    <property type="match status" value="1"/>
</dbReference>
<dbReference type="PIRSF" id="PIRSF002122">
    <property type="entry name" value="RPS7p_RPS7a_RPS5e_RPS7o"/>
    <property type="match status" value="1"/>
</dbReference>
<dbReference type="SUPFAM" id="SSF47973">
    <property type="entry name" value="Ribosomal protein S7"/>
    <property type="match status" value="1"/>
</dbReference>
<dbReference type="PROSITE" id="PS00052">
    <property type="entry name" value="RIBOSOMAL_S7"/>
    <property type="match status" value="1"/>
</dbReference>
<evidence type="ECO:0000255" key="1">
    <source>
        <dbReference type="HAMAP-Rule" id="MF_00480"/>
    </source>
</evidence>
<evidence type="ECO:0000305" key="2"/>
<sequence>MSRKKTQPKKVVTPDPIFNSTIIPKLINSIMYDGKKVVAEKIVYEAIEKIKSKTKEEPINVFNEAINNIKPTVEVRSRRVGGATYQVPVEVKTKRAQALAIRWLVDASRKRKDKHMSDKIFNELYDAYEKKGSAVKKREDVHKMAESNKAFAHFRW</sequence>
<accession>Q4FLL5</accession>
<name>RS7_PELUB</name>